<gene>
    <name evidence="1" type="primary">mraY</name>
    <name type="ordered locus">SA1025</name>
</gene>
<sequence>MIFVYALLALVITFVLVPVLIPTLKRMKFGQSIREEGPQSHMKKTGTPTMGGLTFLLSIVITSLVAIIFVDQANPIILLLFVTIGFGLIGFIDDYIIVVKKNNQGLTSKQKFLAQIGIAIIFFVLSNVFHLVNFSTSIHIPFTNVAIPLSFAYVIFIVFWQVGFSNAVNLTDGLDGLATGLSIIGFTMYAIMSFVLGETAIGIFCIIMLFALLGFLPYNINPAKVFMGDTGSLALGGIFATISIMLNQELSLIFIGLVFVIETLSVMLQVASFKLTGKRIFKMSPIHHHFELIGWSEWKVVTVFWAVGLISGLIGLWIGVH</sequence>
<name>MRAY_STAAN</name>
<feature type="chain" id="PRO_0000108892" description="Phospho-N-acetylmuramoyl-pentapeptide-transferase">
    <location>
        <begin position="1"/>
        <end position="321"/>
    </location>
</feature>
<feature type="transmembrane region" description="Helical" evidence="1">
    <location>
        <begin position="1"/>
        <end position="21"/>
    </location>
</feature>
<feature type="transmembrane region" description="Helical" evidence="1">
    <location>
        <begin position="50"/>
        <end position="70"/>
    </location>
</feature>
<feature type="transmembrane region" description="Helical" evidence="1">
    <location>
        <begin position="76"/>
        <end position="96"/>
    </location>
</feature>
<feature type="transmembrane region" description="Helical" evidence="1">
    <location>
        <begin position="112"/>
        <end position="132"/>
    </location>
</feature>
<feature type="transmembrane region" description="Helical" evidence="1">
    <location>
        <begin position="140"/>
        <end position="160"/>
    </location>
</feature>
<feature type="transmembrane region" description="Helical" evidence="1">
    <location>
        <begin position="176"/>
        <end position="196"/>
    </location>
</feature>
<feature type="transmembrane region" description="Helical" evidence="1">
    <location>
        <begin position="200"/>
        <end position="220"/>
    </location>
</feature>
<feature type="transmembrane region" description="Helical" evidence="1">
    <location>
        <begin position="225"/>
        <end position="245"/>
    </location>
</feature>
<feature type="transmembrane region" description="Helical" evidence="1">
    <location>
        <begin position="250"/>
        <end position="270"/>
    </location>
</feature>
<feature type="transmembrane region" description="Helical" evidence="1">
    <location>
        <begin position="300"/>
        <end position="320"/>
    </location>
</feature>
<evidence type="ECO:0000255" key="1">
    <source>
        <dbReference type="HAMAP-Rule" id="MF_00038"/>
    </source>
</evidence>
<evidence type="ECO:0000305" key="2"/>
<dbReference type="EC" id="2.7.8.13" evidence="1"/>
<dbReference type="EMBL" id="BA000018">
    <property type="protein sequence ID" value="BAB42277.1"/>
    <property type="molecule type" value="Genomic_DNA"/>
</dbReference>
<dbReference type="PIR" id="A89890">
    <property type="entry name" value="A89890"/>
</dbReference>
<dbReference type="RefSeq" id="WP_000578458.1">
    <property type="nucleotide sequence ID" value="NC_002745.2"/>
</dbReference>
<dbReference type="SMR" id="P68783"/>
<dbReference type="EnsemblBacteria" id="BAB42277">
    <property type="protein sequence ID" value="BAB42277"/>
    <property type="gene ID" value="BAB42277"/>
</dbReference>
<dbReference type="KEGG" id="sau:SA1025"/>
<dbReference type="HOGENOM" id="CLU_023982_0_1_9"/>
<dbReference type="UniPathway" id="UPA00219"/>
<dbReference type="GO" id="GO:0005886">
    <property type="term" value="C:plasma membrane"/>
    <property type="evidence" value="ECO:0007669"/>
    <property type="project" value="UniProtKB-SubCell"/>
</dbReference>
<dbReference type="GO" id="GO:0046872">
    <property type="term" value="F:metal ion binding"/>
    <property type="evidence" value="ECO:0007669"/>
    <property type="project" value="UniProtKB-KW"/>
</dbReference>
<dbReference type="GO" id="GO:0008963">
    <property type="term" value="F:phospho-N-acetylmuramoyl-pentapeptide-transferase activity"/>
    <property type="evidence" value="ECO:0007669"/>
    <property type="project" value="UniProtKB-UniRule"/>
</dbReference>
<dbReference type="GO" id="GO:0051301">
    <property type="term" value="P:cell division"/>
    <property type="evidence" value="ECO:0007669"/>
    <property type="project" value="UniProtKB-KW"/>
</dbReference>
<dbReference type="GO" id="GO:0071555">
    <property type="term" value="P:cell wall organization"/>
    <property type="evidence" value="ECO:0007669"/>
    <property type="project" value="UniProtKB-KW"/>
</dbReference>
<dbReference type="GO" id="GO:0009252">
    <property type="term" value="P:peptidoglycan biosynthetic process"/>
    <property type="evidence" value="ECO:0007669"/>
    <property type="project" value="UniProtKB-UniRule"/>
</dbReference>
<dbReference type="GO" id="GO:0008360">
    <property type="term" value="P:regulation of cell shape"/>
    <property type="evidence" value="ECO:0007669"/>
    <property type="project" value="UniProtKB-KW"/>
</dbReference>
<dbReference type="CDD" id="cd06852">
    <property type="entry name" value="GT_MraY"/>
    <property type="match status" value="1"/>
</dbReference>
<dbReference type="HAMAP" id="MF_00038">
    <property type="entry name" value="MraY"/>
    <property type="match status" value="1"/>
</dbReference>
<dbReference type="InterPro" id="IPR000715">
    <property type="entry name" value="Glycosyl_transferase_4"/>
</dbReference>
<dbReference type="InterPro" id="IPR003524">
    <property type="entry name" value="PNAcMuramoyl-5peptid_Trfase"/>
</dbReference>
<dbReference type="InterPro" id="IPR018480">
    <property type="entry name" value="PNAcMuramoyl-5peptid_Trfase_CS"/>
</dbReference>
<dbReference type="NCBIfam" id="TIGR00445">
    <property type="entry name" value="mraY"/>
    <property type="match status" value="1"/>
</dbReference>
<dbReference type="PANTHER" id="PTHR22926">
    <property type="entry name" value="PHOSPHO-N-ACETYLMURAMOYL-PENTAPEPTIDE-TRANSFERASE"/>
    <property type="match status" value="1"/>
</dbReference>
<dbReference type="PANTHER" id="PTHR22926:SF5">
    <property type="entry name" value="PHOSPHO-N-ACETYLMURAMOYL-PENTAPEPTIDE-TRANSFERASE HOMOLOG"/>
    <property type="match status" value="1"/>
</dbReference>
<dbReference type="Pfam" id="PF00953">
    <property type="entry name" value="Glycos_transf_4"/>
    <property type="match status" value="1"/>
</dbReference>
<dbReference type="PROSITE" id="PS01347">
    <property type="entry name" value="MRAY_1"/>
    <property type="match status" value="1"/>
</dbReference>
<dbReference type="PROSITE" id="PS01348">
    <property type="entry name" value="MRAY_2"/>
    <property type="match status" value="1"/>
</dbReference>
<protein>
    <recommendedName>
        <fullName evidence="1">Phospho-N-acetylmuramoyl-pentapeptide-transferase</fullName>
        <ecNumber evidence="1">2.7.8.13</ecNumber>
    </recommendedName>
    <alternativeName>
        <fullName evidence="1">UDP-MurNAc-pentapeptide phosphotransferase</fullName>
    </alternativeName>
</protein>
<keyword id="KW-0131">Cell cycle</keyword>
<keyword id="KW-0132">Cell division</keyword>
<keyword id="KW-1003">Cell membrane</keyword>
<keyword id="KW-0133">Cell shape</keyword>
<keyword id="KW-0961">Cell wall biogenesis/degradation</keyword>
<keyword id="KW-0460">Magnesium</keyword>
<keyword id="KW-0472">Membrane</keyword>
<keyword id="KW-0479">Metal-binding</keyword>
<keyword id="KW-0573">Peptidoglycan synthesis</keyword>
<keyword id="KW-0808">Transferase</keyword>
<keyword id="KW-0812">Transmembrane</keyword>
<keyword id="KW-1133">Transmembrane helix</keyword>
<proteinExistence type="inferred from homology"/>
<reference key="1">
    <citation type="journal article" date="2001" name="Lancet">
        <title>Whole genome sequencing of meticillin-resistant Staphylococcus aureus.</title>
        <authorList>
            <person name="Kuroda M."/>
            <person name="Ohta T."/>
            <person name="Uchiyama I."/>
            <person name="Baba T."/>
            <person name="Yuzawa H."/>
            <person name="Kobayashi I."/>
            <person name="Cui L."/>
            <person name="Oguchi A."/>
            <person name="Aoki K."/>
            <person name="Nagai Y."/>
            <person name="Lian J.-Q."/>
            <person name="Ito T."/>
            <person name="Kanamori M."/>
            <person name="Matsumaru H."/>
            <person name="Maruyama A."/>
            <person name="Murakami H."/>
            <person name="Hosoyama A."/>
            <person name="Mizutani-Ui Y."/>
            <person name="Takahashi N.K."/>
            <person name="Sawano T."/>
            <person name="Inoue R."/>
            <person name="Kaito C."/>
            <person name="Sekimizu K."/>
            <person name="Hirakawa H."/>
            <person name="Kuhara S."/>
            <person name="Goto S."/>
            <person name="Yabuzaki J."/>
            <person name="Kanehisa M."/>
            <person name="Yamashita A."/>
            <person name="Oshima K."/>
            <person name="Furuya K."/>
            <person name="Yoshino C."/>
            <person name="Shiba T."/>
            <person name="Hattori M."/>
            <person name="Ogasawara N."/>
            <person name="Hayashi H."/>
            <person name="Hiramatsu K."/>
        </authorList>
    </citation>
    <scope>NUCLEOTIDE SEQUENCE [LARGE SCALE GENOMIC DNA]</scope>
    <source>
        <strain>N315</strain>
    </source>
</reference>
<organism>
    <name type="scientific">Staphylococcus aureus (strain N315)</name>
    <dbReference type="NCBI Taxonomy" id="158879"/>
    <lineage>
        <taxon>Bacteria</taxon>
        <taxon>Bacillati</taxon>
        <taxon>Bacillota</taxon>
        <taxon>Bacilli</taxon>
        <taxon>Bacillales</taxon>
        <taxon>Staphylococcaceae</taxon>
        <taxon>Staphylococcus</taxon>
    </lineage>
</organism>
<comment type="function">
    <text evidence="1">Catalyzes the initial step of the lipid cycle reactions in the biosynthesis of the cell wall peptidoglycan: transfers peptidoglycan precursor phospho-MurNAc-pentapeptide from UDP-MurNAc-pentapeptide onto the lipid carrier undecaprenyl phosphate, yielding undecaprenyl-pyrophosphoryl-MurNAc-pentapeptide, known as lipid I.</text>
</comment>
<comment type="catalytic activity">
    <reaction evidence="1">
        <text>UDP-N-acetyl-alpha-D-muramoyl-L-alanyl-gamma-D-glutamyl-L-lysyl-D-alanyl-D-alanine + di-trans,octa-cis-undecaprenyl phosphate = Mur2Ac(oyl-L-Ala-gamma-D-Glu-L-Lys-D-Ala-D-Ala)-di-trans,octa-cis-undecaprenyl diphosphate + UMP</text>
        <dbReference type="Rhea" id="RHEA:21920"/>
        <dbReference type="ChEBI" id="CHEBI:57865"/>
        <dbReference type="ChEBI" id="CHEBI:60032"/>
        <dbReference type="ChEBI" id="CHEBI:60392"/>
        <dbReference type="ChEBI" id="CHEBI:70758"/>
        <dbReference type="EC" id="2.7.8.13"/>
    </reaction>
</comment>
<comment type="cofactor">
    <cofactor evidence="1">
        <name>Mg(2+)</name>
        <dbReference type="ChEBI" id="CHEBI:18420"/>
    </cofactor>
</comment>
<comment type="pathway">
    <text evidence="1">Cell wall biogenesis; peptidoglycan biosynthesis.</text>
</comment>
<comment type="subcellular location">
    <subcellularLocation>
        <location evidence="1">Cell membrane</location>
        <topology evidence="1">Multi-pass membrane protein</topology>
    </subcellularLocation>
</comment>
<comment type="similarity">
    <text evidence="1 2">Belongs to the glycosyltransferase 4 family. MraY subfamily.</text>
</comment>
<accession>P68783</accession>
<accession>O07322</accession>
<accession>O24815</accession>